<accession>P30765</accession>
<reference key="1">
    <citation type="journal article" date="1993" name="Mol. Microbiol.">
        <title>Nucleotide sequence of the first cosmid from the Mycobacterium leprae genome project: structure and function of the Rif-Str regions.</title>
        <authorList>
            <person name="Honore N.T."/>
            <person name="Bergh S."/>
            <person name="Chanteau S."/>
            <person name="Doucet-Populaire F."/>
            <person name="Eiglmeier K."/>
            <person name="Garnier T."/>
            <person name="Georges C."/>
            <person name="Launois P."/>
            <person name="Limpaiboon T."/>
            <person name="Newton S."/>
            <person name="Niang K."/>
            <person name="del Portillo P."/>
            <person name="Ramesh G.R."/>
            <person name="Reddi P."/>
            <person name="Ridel P.R."/>
            <person name="Sittisombut N."/>
            <person name="Wu-Hunter S."/>
            <person name="Cole S.T."/>
        </authorList>
    </citation>
    <scope>NUCLEOTIDE SEQUENCE [GENOMIC DNA]</scope>
</reference>
<reference key="2">
    <citation type="journal article" date="2001" name="Nature">
        <title>Massive gene decay in the leprosy bacillus.</title>
        <authorList>
            <person name="Cole S.T."/>
            <person name="Eiglmeier K."/>
            <person name="Parkhill J."/>
            <person name="James K.D."/>
            <person name="Thomson N.R."/>
            <person name="Wheeler P.R."/>
            <person name="Honore N."/>
            <person name="Garnier T."/>
            <person name="Churcher C.M."/>
            <person name="Harris D.E."/>
            <person name="Mungall K.L."/>
            <person name="Basham D."/>
            <person name="Brown D."/>
            <person name="Chillingworth T."/>
            <person name="Connor R."/>
            <person name="Davies R.M."/>
            <person name="Devlin K."/>
            <person name="Duthoy S."/>
            <person name="Feltwell T."/>
            <person name="Fraser A."/>
            <person name="Hamlin N."/>
            <person name="Holroyd S."/>
            <person name="Hornsby T."/>
            <person name="Jagels K."/>
            <person name="Lacroix C."/>
            <person name="Maclean J."/>
            <person name="Moule S."/>
            <person name="Murphy L.D."/>
            <person name="Oliver K."/>
            <person name="Quail M.A."/>
            <person name="Rajandream M.A."/>
            <person name="Rutherford K.M."/>
            <person name="Rutter S."/>
            <person name="Seeger K."/>
            <person name="Simon S."/>
            <person name="Simmonds M."/>
            <person name="Skelton J."/>
            <person name="Squares R."/>
            <person name="Squares S."/>
            <person name="Stevens K."/>
            <person name="Taylor K."/>
            <person name="Whitehead S."/>
            <person name="Woodward J.R."/>
            <person name="Barrell B.G."/>
        </authorList>
    </citation>
    <scope>NUCLEOTIDE SEQUENCE [LARGE SCALE GENOMIC DNA]</scope>
    <source>
        <strain>TN</strain>
    </source>
</reference>
<organism>
    <name type="scientific">Mycobacterium leprae (strain TN)</name>
    <dbReference type="NCBI Taxonomy" id="272631"/>
    <lineage>
        <taxon>Bacteria</taxon>
        <taxon>Bacillati</taxon>
        <taxon>Actinomycetota</taxon>
        <taxon>Actinomycetes</taxon>
        <taxon>Mycobacteriales</taxon>
        <taxon>Mycobacteriaceae</taxon>
        <taxon>Mycobacterium</taxon>
    </lineage>
</organism>
<keyword id="KW-1185">Reference proteome</keyword>
<keyword id="KW-0687">Ribonucleoprotein</keyword>
<keyword id="KW-0689">Ribosomal protein</keyword>
<name>RS10_MYCLE</name>
<sequence>MAGQKIRIRLKAYDHEAIDASARKIVETVVRTGANVVGPVPLPTEKNVYCVIRSPHKYKDSREHFEMRTHKRLIDILDPTPKTVDALMRIDLPASVDVNIQ</sequence>
<feature type="chain" id="PRO_0000146554" description="Small ribosomal subunit protein uS10">
    <location>
        <begin position="1"/>
        <end position="101"/>
    </location>
</feature>
<protein>
    <recommendedName>
        <fullName evidence="1">Small ribosomal subunit protein uS10</fullName>
    </recommendedName>
    <alternativeName>
        <fullName evidence="2">30S ribosomal protein S10</fullName>
    </alternativeName>
</protein>
<dbReference type="EMBL" id="Z14314">
    <property type="protein sequence ID" value="CAA78676.1"/>
    <property type="molecule type" value="Genomic_DNA"/>
</dbReference>
<dbReference type="EMBL" id="AL583923">
    <property type="protein sequence ID" value="CAC30818.1"/>
    <property type="molecule type" value="Genomic_DNA"/>
</dbReference>
<dbReference type="PIR" id="S31153">
    <property type="entry name" value="S31153"/>
</dbReference>
<dbReference type="RefSeq" id="NP_302266.1">
    <property type="nucleotide sequence ID" value="NC_002677.1"/>
</dbReference>
<dbReference type="RefSeq" id="WP_010908587.1">
    <property type="nucleotide sequence ID" value="NC_002677.1"/>
</dbReference>
<dbReference type="SMR" id="P30765"/>
<dbReference type="STRING" id="272631.gene:17575712"/>
<dbReference type="KEGG" id="mle:ML1864"/>
<dbReference type="PATRIC" id="fig|272631.5.peg.3525"/>
<dbReference type="Leproma" id="ML1864"/>
<dbReference type="eggNOG" id="COG0051">
    <property type="taxonomic scope" value="Bacteria"/>
</dbReference>
<dbReference type="HOGENOM" id="CLU_122625_1_3_11"/>
<dbReference type="OrthoDB" id="9804464at2"/>
<dbReference type="Proteomes" id="UP000000806">
    <property type="component" value="Chromosome"/>
</dbReference>
<dbReference type="GO" id="GO:1990904">
    <property type="term" value="C:ribonucleoprotein complex"/>
    <property type="evidence" value="ECO:0007669"/>
    <property type="project" value="UniProtKB-KW"/>
</dbReference>
<dbReference type="GO" id="GO:0005840">
    <property type="term" value="C:ribosome"/>
    <property type="evidence" value="ECO:0007669"/>
    <property type="project" value="UniProtKB-KW"/>
</dbReference>
<dbReference type="GO" id="GO:0003735">
    <property type="term" value="F:structural constituent of ribosome"/>
    <property type="evidence" value="ECO:0007669"/>
    <property type="project" value="InterPro"/>
</dbReference>
<dbReference type="GO" id="GO:0000049">
    <property type="term" value="F:tRNA binding"/>
    <property type="evidence" value="ECO:0007669"/>
    <property type="project" value="UniProtKB-UniRule"/>
</dbReference>
<dbReference type="GO" id="GO:0006412">
    <property type="term" value="P:translation"/>
    <property type="evidence" value="ECO:0007669"/>
    <property type="project" value="UniProtKB-UniRule"/>
</dbReference>
<dbReference type="FunFam" id="3.30.70.600:FF:000001">
    <property type="entry name" value="30S ribosomal protein S10"/>
    <property type="match status" value="1"/>
</dbReference>
<dbReference type="Gene3D" id="3.30.70.600">
    <property type="entry name" value="Ribosomal protein S10 domain"/>
    <property type="match status" value="1"/>
</dbReference>
<dbReference type="HAMAP" id="MF_00508">
    <property type="entry name" value="Ribosomal_uS10"/>
    <property type="match status" value="1"/>
</dbReference>
<dbReference type="InterPro" id="IPR001848">
    <property type="entry name" value="Ribosomal_uS10"/>
</dbReference>
<dbReference type="InterPro" id="IPR018268">
    <property type="entry name" value="Ribosomal_uS10_CS"/>
</dbReference>
<dbReference type="InterPro" id="IPR027486">
    <property type="entry name" value="Ribosomal_uS10_dom"/>
</dbReference>
<dbReference type="InterPro" id="IPR036838">
    <property type="entry name" value="Ribosomal_uS10_dom_sf"/>
</dbReference>
<dbReference type="NCBIfam" id="NF001861">
    <property type="entry name" value="PRK00596.1"/>
    <property type="match status" value="1"/>
</dbReference>
<dbReference type="NCBIfam" id="TIGR01049">
    <property type="entry name" value="rpsJ_bact"/>
    <property type="match status" value="1"/>
</dbReference>
<dbReference type="PANTHER" id="PTHR11700">
    <property type="entry name" value="30S RIBOSOMAL PROTEIN S10 FAMILY MEMBER"/>
    <property type="match status" value="1"/>
</dbReference>
<dbReference type="Pfam" id="PF00338">
    <property type="entry name" value="Ribosomal_S10"/>
    <property type="match status" value="1"/>
</dbReference>
<dbReference type="PRINTS" id="PR00971">
    <property type="entry name" value="RIBOSOMALS10"/>
</dbReference>
<dbReference type="SMART" id="SM01403">
    <property type="entry name" value="Ribosomal_S10"/>
    <property type="match status" value="1"/>
</dbReference>
<dbReference type="SUPFAM" id="SSF54999">
    <property type="entry name" value="Ribosomal protein S10"/>
    <property type="match status" value="1"/>
</dbReference>
<dbReference type="PROSITE" id="PS00361">
    <property type="entry name" value="RIBOSOMAL_S10"/>
    <property type="match status" value="1"/>
</dbReference>
<gene>
    <name evidence="1" type="primary">rpsJ</name>
    <name type="ordered locus">ML1864</name>
</gene>
<comment type="function">
    <text evidence="1">Involved in the binding of tRNA to the ribosomes.</text>
</comment>
<comment type="subunit">
    <text evidence="1">Part of the 30S ribosomal subunit.</text>
</comment>
<comment type="similarity">
    <text evidence="1">Belongs to the universal ribosomal protein uS10 family.</text>
</comment>
<evidence type="ECO:0000255" key="1">
    <source>
        <dbReference type="HAMAP-Rule" id="MF_00508"/>
    </source>
</evidence>
<evidence type="ECO:0000305" key="2"/>
<proteinExistence type="inferred from homology"/>